<sequence length="767" mass="87062">MGNGERGRPNKKMKYGGKDDQKMKNIQNAEDYYDDADEDSRDGEGEEKKRDFTKLELKPDHGNRPLWACADGRIFLETFSPLYKQAYDFLIAIAEPVCRPESMHEYNLTPHSLYAAVSVGLETETIISVLNKLSKTKLPKEMIEFIHASTANYGKVKLVLKKNRYFIESPFPEVLKRLLSDDVINRARFSSEPYYGGDGFSVGRTCGELEAGPGELLNEAEFAAAAEEKETHSFEIDPAQVENVKQRCLPNALNYPMLEEYDFRNDNVNPDLDMELKPHAQPRPYQEKSLSKMFGNGRARSGIIVLPCGAGKSLVGVSAAARIKKSCLCLATNAVSVDQWAFQFKLWSTIRDDQICRFTSDSKERFRGNAGVVVTTYNMVAFGGKRSEESEKIIEEMRNREWGLLLMDEVHVVPAHMFRKVISITKSHCKLGLTATLVREDERITDLNFLIGPKLYEANWLDLVKGGFIANVQCAEVWCPMTKEFFAEYLKKENSKKKQALYVMNPNKFRACEFLIRFHEQQRGDKIIVFADNLFALTEYAMKLRKPMIYGATSHIERTKILEAFKTSKDVNTVFLSKVGDNSIDIPEANVIIQISSHAGSRRQEAQRLGRILRAKGKLEDRMAGGKEEYNAFFYSLVSTDTQEMYYSTKRQQFLIDQGYSFKVITSLPPPDAGSSLSYHSQEEQLSLLGKVMNAGDDLVGLEQLEEDTDGMALQKARRSMGSMSVMSGSKGMVYMEYNSGRHKSGQQFKKPKDPTKRHNLFKKRYV</sequence>
<organism>
    <name type="scientific">Arabidopsis thaliana</name>
    <name type="common">Mouse-ear cress</name>
    <dbReference type="NCBI Taxonomy" id="3702"/>
    <lineage>
        <taxon>Eukaryota</taxon>
        <taxon>Viridiplantae</taxon>
        <taxon>Streptophyta</taxon>
        <taxon>Embryophyta</taxon>
        <taxon>Tracheophyta</taxon>
        <taxon>Spermatophyta</taxon>
        <taxon>Magnoliopsida</taxon>
        <taxon>eudicotyledons</taxon>
        <taxon>Gunneridae</taxon>
        <taxon>Pentapetalae</taxon>
        <taxon>rosids</taxon>
        <taxon>malvids</taxon>
        <taxon>Brassicales</taxon>
        <taxon>Brassicaceae</taxon>
        <taxon>Camelineae</taxon>
        <taxon>Arabidopsis</taxon>
    </lineage>
</organism>
<proteinExistence type="evidence at transcript level"/>
<keyword id="KW-0067">ATP-binding</keyword>
<keyword id="KW-0227">DNA damage</keyword>
<keyword id="KW-0234">DNA repair</keyword>
<keyword id="KW-0238">DNA-binding</keyword>
<keyword id="KW-0347">Helicase</keyword>
<keyword id="KW-0378">Hydrolase</keyword>
<keyword id="KW-0413">Isomerase</keyword>
<keyword id="KW-0547">Nucleotide-binding</keyword>
<keyword id="KW-0539">Nucleus</keyword>
<keyword id="KW-1185">Reference proteome</keyword>
<keyword id="KW-0804">Transcription</keyword>
<keyword id="KW-0805">Transcription regulation</keyword>
<dbReference type="EC" id="5.6.2.4" evidence="9"/>
<dbReference type="EMBL" id="U29168">
    <property type="protein sequence ID" value="AAC49987.2"/>
    <property type="molecule type" value="mRNA"/>
</dbReference>
<dbReference type="EMBL" id="AY550923">
    <property type="protein sequence ID" value="AAT36215.1"/>
    <property type="molecule type" value="Genomic_DNA"/>
</dbReference>
<dbReference type="EMBL" id="AB006707">
    <property type="protein sequence ID" value="BAB08509.1"/>
    <property type="status" value="ALT_SEQ"/>
    <property type="molecule type" value="Genomic_DNA"/>
</dbReference>
<dbReference type="EMBL" id="CP002688">
    <property type="protein sequence ID" value="AED94670.1"/>
    <property type="molecule type" value="Genomic_DNA"/>
</dbReference>
<dbReference type="EMBL" id="AY039547">
    <property type="protein sequence ID" value="AAK62602.1"/>
    <property type="molecule type" value="mRNA"/>
</dbReference>
<dbReference type="EMBL" id="AY113008">
    <property type="protein sequence ID" value="AAM47316.1"/>
    <property type="molecule type" value="mRNA"/>
</dbReference>
<dbReference type="PIR" id="S71206">
    <property type="entry name" value="S71206"/>
</dbReference>
<dbReference type="RefSeq" id="NP_568592.1">
    <property type="nucleotide sequence ID" value="NM_123502.3"/>
</dbReference>
<dbReference type="SMR" id="Q38861"/>
<dbReference type="BioGRID" id="19390">
    <property type="interactions" value="1"/>
</dbReference>
<dbReference type="FunCoup" id="Q38861">
    <property type="interactions" value="4213"/>
</dbReference>
<dbReference type="IntAct" id="Q38861">
    <property type="interactions" value="1"/>
</dbReference>
<dbReference type="STRING" id="3702.Q38861"/>
<dbReference type="iPTMnet" id="Q38861"/>
<dbReference type="PaxDb" id="3702-AT5G41370.1"/>
<dbReference type="ProteomicsDB" id="242578"/>
<dbReference type="EnsemblPlants" id="AT5G41370.1">
    <property type="protein sequence ID" value="AT5G41370.1"/>
    <property type="gene ID" value="AT5G41370"/>
</dbReference>
<dbReference type="GeneID" id="834139"/>
<dbReference type="Gramene" id="AT5G41370.1">
    <property type="protein sequence ID" value="AT5G41370.1"/>
    <property type="gene ID" value="AT5G41370"/>
</dbReference>
<dbReference type="KEGG" id="ath:AT5G41370"/>
<dbReference type="Araport" id="AT5G41370"/>
<dbReference type="TAIR" id="AT5G41370">
    <property type="gene designation" value="XPB1"/>
</dbReference>
<dbReference type="eggNOG" id="KOG1123">
    <property type="taxonomic scope" value="Eukaryota"/>
</dbReference>
<dbReference type="HOGENOM" id="CLU_008213_0_0_1"/>
<dbReference type="InParanoid" id="Q38861"/>
<dbReference type="OMA" id="RCQEIDY"/>
<dbReference type="OrthoDB" id="10262986at2759"/>
<dbReference type="PhylomeDB" id="Q38861"/>
<dbReference type="PRO" id="PR:Q38861"/>
<dbReference type="Proteomes" id="UP000006548">
    <property type="component" value="Chromosome 5"/>
</dbReference>
<dbReference type="ExpressionAtlas" id="Q38861">
    <property type="expression patterns" value="baseline and differential"/>
</dbReference>
<dbReference type="GO" id="GO:0005737">
    <property type="term" value="C:cytoplasm"/>
    <property type="evidence" value="ECO:0007005"/>
    <property type="project" value="TAIR"/>
</dbReference>
<dbReference type="GO" id="GO:0005634">
    <property type="term" value="C:nucleus"/>
    <property type="evidence" value="ECO:0007005"/>
    <property type="project" value="TAIR"/>
</dbReference>
<dbReference type="GO" id="GO:0005524">
    <property type="term" value="F:ATP binding"/>
    <property type="evidence" value="ECO:0007669"/>
    <property type="project" value="UniProtKB-KW"/>
</dbReference>
<dbReference type="GO" id="GO:0016887">
    <property type="term" value="F:ATP hydrolysis activity"/>
    <property type="evidence" value="ECO:0007669"/>
    <property type="project" value="RHEA"/>
</dbReference>
<dbReference type="GO" id="GO:0003677">
    <property type="term" value="F:DNA binding"/>
    <property type="evidence" value="ECO:0007669"/>
    <property type="project" value="UniProtKB-KW"/>
</dbReference>
<dbReference type="GO" id="GO:0003678">
    <property type="term" value="F:DNA helicase activity"/>
    <property type="evidence" value="ECO:0007669"/>
    <property type="project" value="InterPro"/>
</dbReference>
<dbReference type="GO" id="GO:0006289">
    <property type="term" value="P:nucleotide-excision repair"/>
    <property type="evidence" value="ECO:0007669"/>
    <property type="project" value="InterPro"/>
</dbReference>
<dbReference type="GO" id="GO:0009411">
    <property type="term" value="P:response to UV"/>
    <property type="evidence" value="ECO:0000270"/>
    <property type="project" value="TAIR"/>
</dbReference>
<dbReference type="GO" id="GO:0006367">
    <property type="term" value="P:transcription initiation at RNA polymerase II promoter"/>
    <property type="evidence" value="ECO:0007669"/>
    <property type="project" value="InterPro"/>
</dbReference>
<dbReference type="CDD" id="cd18029">
    <property type="entry name" value="DEXHc_XPB"/>
    <property type="match status" value="1"/>
</dbReference>
<dbReference type="CDD" id="cd18789">
    <property type="entry name" value="SF2_C_XPB"/>
    <property type="match status" value="1"/>
</dbReference>
<dbReference type="FunFam" id="3.40.50.300:FF:000077">
    <property type="entry name" value="Probable DNA repair helicase RAD25"/>
    <property type="match status" value="1"/>
</dbReference>
<dbReference type="FunFam" id="3.40.50.300:FF:000117">
    <property type="entry name" value="Putative DNA repair helicase rad25"/>
    <property type="match status" value="1"/>
</dbReference>
<dbReference type="Gene3D" id="3.40.50.300">
    <property type="entry name" value="P-loop containing nucleotide triphosphate hydrolases"/>
    <property type="match status" value="2"/>
</dbReference>
<dbReference type="InterPro" id="IPR050615">
    <property type="entry name" value="ATP-dep_DNA_Helicase"/>
</dbReference>
<dbReference type="InterPro" id="IPR032438">
    <property type="entry name" value="ERCC3_RAD25_C"/>
</dbReference>
<dbReference type="InterPro" id="IPR006935">
    <property type="entry name" value="Helicase/UvrB_N"/>
</dbReference>
<dbReference type="InterPro" id="IPR014001">
    <property type="entry name" value="Helicase_ATP-bd"/>
</dbReference>
<dbReference type="InterPro" id="IPR001650">
    <property type="entry name" value="Helicase_C-like"/>
</dbReference>
<dbReference type="InterPro" id="IPR027417">
    <property type="entry name" value="P-loop_NTPase"/>
</dbReference>
<dbReference type="InterPro" id="IPR001161">
    <property type="entry name" value="XPB/Ssl2"/>
</dbReference>
<dbReference type="InterPro" id="IPR032830">
    <property type="entry name" value="XPB/Ssl2_N"/>
</dbReference>
<dbReference type="NCBIfam" id="TIGR00603">
    <property type="entry name" value="rad25"/>
    <property type="match status" value="1"/>
</dbReference>
<dbReference type="PANTHER" id="PTHR11274:SF0">
    <property type="entry name" value="GENERAL TRANSCRIPTION AND DNA REPAIR FACTOR IIH HELICASE SUBUNIT XPB"/>
    <property type="match status" value="1"/>
</dbReference>
<dbReference type="PANTHER" id="PTHR11274">
    <property type="entry name" value="RAD25/XP-B DNA REPAIR HELICASE"/>
    <property type="match status" value="1"/>
</dbReference>
<dbReference type="Pfam" id="PF16203">
    <property type="entry name" value="ERCC3_RAD25_C"/>
    <property type="match status" value="1"/>
</dbReference>
<dbReference type="Pfam" id="PF13625">
    <property type="entry name" value="Helicase_C_3"/>
    <property type="match status" value="1"/>
</dbReference>
<dbReference type="Pfam" id="PF04851">
    <property type="entry name" value="ResIII"/>
    <property type="match status" value="1"/>
</dbReference>
<dbReference type="PRINTS" id="PR00851">
    <property type="entry name" value="XRODRMPGMNTB"/>
</dbReference>
<dbReference type="SMART" id="SM00487">
    <property type="entry name" value="DEXDc"/>
    <property type="match status" value="1"/>
</dbReference>
<dbReference type="SMART" id="SM00490">
    <property type="entry name" value="HELICc"/>
    <property type="match status" value="1"/>
</dbReference>
<dbReference type="SUPFAM" id="SSF52540">
    <property type="entry name" value="P-loop containing nucleoside triphosphate hydrolases"/>
    <property type="match status" value="2"/>
</dbReference>
<dbReference type="PROSITE" id="PS51192">
    <property type="entry name" value="HELICASE_ATP_BIND_1"/>
    <property type="match status" value="1"/>
</dbReference>
<dbReference type="PROSITE" id="PS51194">
    <property type="entry name" value="HELICASE_CTER"/>
    <property type="match status" value="1"/>
</dbReference>
<reference key="1">
    <citation type="journal article" date="1998" name="Gene">
        <title>Cloning of a cDNA from Arabidopsis thaliana homologous to the human XPB gene.</title>
        <authorList>
            <person name="Ribeiro D.T."/>
            <person name="Machado C.R."/>
            <person name="Costa R.M.A."/>
            <person name="Praekelt U.M."/>
            <person name="Van Sluys M.-A."/>
            <person name="Menck C.F.M."/>
        </authorList>
    </citation>
    <scope>NUCLEOTIDE SEQUENCE [MRNA]</scope>
    <scope>TISSUE SPECIFICITY</scope>
    <source>
        <strain>cv. Columbia</strain>
    </source>
</reference>
<reference key="2">
    <citation type="journal article" date="2005" name="Gene">
        <title>Functional XPB/RAD25 redundancy in Arabidopsis genome: characterization of AtXPB2 and expression analysis.</title>
        <authorList>
            <person name="Morgante P.G."/>
            <person name="Berra C.M."/>
            <person name="Nakabashi M."/>
            <person name="Costa R.M.A."/>
            <person name="Menck C.F.M."/>
            <person name="Van Sluys M.-A."/>
        </authorList>
    </citation>
    <scope>NUCLEOTIDE SEQUENCE [GENOMIC DNA]</scope>
    <scope>TISSUE SPECIFICITY</scope>
    <scope>DEVELOPMENTAL STAGE</scope>
    <scope>INDUCTION</scope>
    <source>
        <strain>cv. Landsberg erecta</strain>
        <strain>cv. Wassilewskija</strain>
    </source>
</reference>
<reference key="3">
    <citation type="journal article" date="1997" name="DNA Res.">
        <title>Structural analysis of Arabidopsis thaliana chromosome 5. II. Sequence features of the regions of 1,044,062 bp covered by thirteen physically assigned P1 clones.</title>
        <authorList>
            <person name="Kotani H."/>
            <person name="Nakamura Y."/>
            <person name="Sato S."/>
            <person name="Kaneko T."/>
            <person name="Asamizu E."/>
            <person name="Miyajima N."/>
            <person name="Tabata S."/>
        </authorList>
    </citation>
    <scope>NUCLEOTIDE SEQUENCE [LARGE SCALE GENOMIC DNA]</scope>
    <source>
        <strain>cv. Columbia</strain>
    </source>
</reference>
<reference key="4">
    <citation type="journal article" date="2017" name="Plant J.">
        <title>Araport11: a complete reannotation of the Arabidopsis thaliana reference genome.</title>
        <authorList>
            <person name="Cheng C.Y."/>
            <person name="Krishnakumar V."/>
            <person name="Chan A.P."/>
            <person name="Thibaud-Nissen F."/>
            <person name="Schobel S."/>
            <person name="Town C.D."/>
        </authorList>
    </citation>
    <scope>GENOME REANNOTATION</scope>
    <source>
        <strain>cv. Columbia</strain>
    </source>
</reference>
<reference key="5">
    <citation type="journal article" date="2003" name="Science">
        <title>Empirical analysis of transcriptional activity in the Arabidopsis genome.</title>
        <authorList>
            <person name="Yamada K."/>
            <person name="Lim J."/>
            <person name="Dale J.M."/>
            <person name="Chen H."/>
            <person name="Shinn P."/>
            <person name="Palm C.J."/>
            <person name="Southwick A.M."/>
            <person name="Wu H.C."/>
            <person name="Kim C.J."/>
            <person name="Nguyen M."/>
            <person name="Pham P.K."/>
            <person name="Cheuk R.F."/>
            <person name="Karlin-Newmann G."/>
            <person name="Liu S.X."/>
            <person name="Lam B."/>
            <person name="Sakano H."/>
            <person name="Wu T."/>
            <person name="Yu G."/>
            <person name="Miranda M."/>
            <person name="Quach H.L."/>
            <person name="Tripp M."/>
            <person name="Chang C.H."/>
            <person name="Lee J.M."/>
            <person name="Toriumi M.J."/>
            <person name="Chan M.M."/>
            <person name="Tang C.C."/>
            <person name="Onodera C.S."/>
            <person name="Deng J.M."/>
            <person name="Akiyama K."/>
            <person name="Ansari Y."/>
            <person name="Arakawa T."/>
            <person name="Banh J."/>
            <person name="Banno F."/>
            <person name="Bowser L."/>
            <person name="Brooks S.Y."/>
            <person name="Carninci P."/>
            <person name="Chao Q."/>
            <person name="Choy N."/>
            <person name="Enju A."/>
            <person name="Goldsmith A.D."/>
            <person name="Gurjal M."/>
            <person name="Hansen N.F."/>
            <person name="Hayashizaki Y."/>
            <person name="Johnson-Hopson C."/>
            <person name="Hsuan V.W."/>
            <person name="Iida K."/>
            <person name="Karnes M."/>
            <person name="Khan S."/>
            <person name="Koesema E."/>
            <person name="Ishida J."/>
            <person name="Jiang P.X."/>
            <person name="Jones T."/>
            <person name="Kawai J."/>
            <person name="Kamiya A."/>
            <person name="Meyers C."/>
            <person name="Nakajima M."/>
            <person name="Narusaka M."/>
            <person name="Seki M."/>
            <person name="Sakurai T."/>
            <person name="Satou M."/>
            <person name="Tamse R."/>
            <person name="Vaysberg M."/>
            <person name="Wallender E.K."/>
            <person name="Wong C."/>
            <person name="Yamamura Y."/>
            <person name="Yuan S."/>
            <person name="Shinozaki K."/>
            <person name="Davis R.W."/>
            <person name="Theologis A."/>
            <person name="Ecker J.R."/>
        </authorList>
    </citation>
    <scope>NUCLEOTIDE SEQUENCE [LARGE SCALE MRNA]</scope>
    <source>
        <strain>cv. Columbia</strain>
    </source>
</reference>
<reference key="6">
    <citation type="journal article" date="2001" name="Plant J.">
        <title>The participation of AtXPB1, the XPB/RAD25 homologue gene from Arabidopsis thaliana, in DNA repair and plant development.</title>
        <authorList>
            <person name="Costa R.M.A."/>
            <person name="Morgante P.G."/>
            <person name="Berra C.M."/>
            <person name="Nakabashi M."/>
            <person name="Bruneau D."/>
            <person name="Bouchez D."/>
            <person name="Sweder K.S."/>
            <person name="Van Sluys M.-A."/>
            <person name="Menck C.F.M."/>
        </authorList>
    </citation>
    <scope>FUNCTION</scope>
    <scope>DISRUPTION PHENOTYPE</scope>
    <source>
        <strain>cv. Wassilewskija</strain>
    </source>
</reference>
<reference key="7">
    <citation type="journal article" date="2005" name="Environ. Mol. Mutagen.">
        <title>Components of nucleotide excision repair and DNA damage tolerance in Arabidopsis thaliana.</title>
        <authorList>
            <person name="Kunz B.A."/>
            <person name="Anderson H.J."/>
            <person name="Osmond M.J."/>
            <person name="Vonarx E.J."/>
        </authorList>
    </citation>
    <scope>COMPONENT OF TFIIH CORE COMPLEX</scope>
    <scope>NOMENCLATURE</scope>
</reference>
<reference key="8">
    <citation type="journal article" date="2013" name="PLoS ONE">
        <title>Genome-wide comparative in silico analysis of the RNA helicase gene family in Zea mays and Glycine max: a comparison with Arabidopsis and Oryza sativa.</title>
        <authorList>
            <person name="Xu R."/>
            <person name="Zhang S."/>
            <person name="Huang J."/>
            <person name="Zheng C."/>
        </authorList>
    </citation>
    <scope>GENE FAMILY</scope>
</reference>
<feature type="chain" id="PRO_0000101991" description="General transcription and DNA repair factor IIH helicase/translocase subunit XPB1">
    <location>
        <begin position="1"/>
        <end position="767"/>
    </location>
</feature>
<feature type="domain" description="Helicase ATP-binding" evidence="3">
    <location>
        <begin position="293"/>
        <end position="455"/>
    </location>
</feature>
<feature type="domain" description="Helicase C-terminal" evidence="4">
    <location>
        <begin position="510"/>
        <end position="676"/>
    </location>
</feature>
<feature type="region of interest" description="Disordered" evidence="5">
    <location>
        <begin position="1"/>
        <end position="51"/>
    </location>
</feature>
<feature type="region of interest" description="Disordered" evidence="5">
    <location>
        <begin position="742"/>
        <end position="767"/>
    </location>
</feature>
<feature type="short sequence motif" description="DEVH box">
    <location>
        <begin position="408"/>
        <end position="411"/>
    </location>
</feature>
<feature type="short sequence motif" description="Nuclear localization signal" evidence="2">
    <location>
        <begin position="750"/>
        <end position="766"/>
    </location>
</feature>
<feature type="compositionally biased region" description="Acidic residues" evidence="5">
    <location>
        <begin position="31"/>
        <end position="41"/>
    </location>
</feature>
<feature type="compositionally biased region" description="Basic and acidic residues" evidence="5">
    <location>
        <begin position="42"/>
        <end position="51"/>
    </location>
</feature>
<feature type="compositionally biased region" description="Basic residues" evidence="5">
    <location>
        <begin position="758"/>
        <end position="767"/>
    </location>
</feature>
<feature type="binding site" evidence="3">
    <location>
        <begin position="306"/>
        <end position="313"/>
    </location>
    <ligand>
        <name>ATP</name>
        <dbReference type="ChEBI" id="CHEBI:30616"/>
    </ligand>
</feature>
<evidence type="ECO:0000250" key="1">
    <source>
        <dbReference type="UniProtKB" id="P19447"/>
    </source>
</evidence>
<evidence type="ECO:0000255" key="2"/>
<evidence type="ECO:0000255" key="3">
    <source>
        <dbReference type="PROSITE-ProRule" id="PRU00541"/>
    </source>
</evidence>
<evidence type="ECO:0000255" key="4">
    <source>
        <dbReference type="PROSITE-ProRule" id="PRU00542"/>
    </source>
</evidence>
<evidence type="ECO:0000256" key="5">
    <source>
        <dbReference type="SAM" id="MobiDB-lite"/>
    </source>
</evidence>
<evidence type="ECO:0000269" key="6">
    <source>
    </source>
</evidence>
<evidence type="ECO:0000269" key="7">
    <source>
    </source>
</evidence>
<evidence type="ECO:0000269" key="8">
    <source>
    </source>
</evidence>
<evidence type="ECO:0000305" key="9"/>
<evidence type="ECO:0000305" key="10">
    <source>
    </source>
</evidence>
<name>XPB1_ARATH</name>
<accession>Q38861</accession>
<accession>O04171</accession>
<accession>Q6JA92</accession>
<accession>Q9FN63</accession>
<comment type="function">
    <text evidence="1 6">ATP-dependent 3'-5' DNA helicase/translocase; binds dsDNA rather than ssDNA, unzipping it in a translocase rather than classical helicase activity (By similarity). Component of the general transcription and DNA repair factor IIH (TFIIH) core complex. When complexed to CDK-activating kinase (CAK), involved in RNA transcription by RNA polymerase II. The ATPase activity of XPB/ERCC3, but not its helicase activity, is required for DNA opening; it may wrap around the damaged DNA wedging it open, causing localized melting and twisting that allows XPD/ERCC2 helicase to anchor. The ATP-dependent helicase activity of XPB/ERCC3 may be required for promoter escape. Also involved in transcription-coupled nucleotide excision repair (NER) of damaged DNA. In NER, TFIIH acts by opening DNA around the lesion to allow the excision of the damaged oligonucleotide and its replacement by a new DNA fragment. The structure of the TFIIH transcription complex differs from the NER-TFIIH complex (By similarity). Partially complements UV sensitivity of a yeast SSL2 mutation (PubMed:11737776). Required during the early stages of development, including seed germination (PubMed:11737776).</text>
</comment>
<comment type="catalytic activity">
    <reaction evidence="1">
        <text>Couples ATP hydrolysis with the unwinding of duplex DNA by translocating in the 3'-5' direction.</text>
        <dbReference type="EC" id="5.6.2.4"/>
    </reaction>
</comment>
<comment type="catalytic activity">
    <reaction evidence="1">
        <text>ATP + H2O = ADP + phosphate + H(+)</text>
        <dbReference type="Rhea" id="RHEA:13065"/>
        <dbReference type="ChEBI" id="CHEBI:15377"/>
        <dbReference type="ChEBI" id="CHEBI:15378"/>
        <dbReference type="ChEBI" id="CHEBI:30616"/>
        <dbReference type="ChEBI" id="CHEBI:43474"/>
        <dbReference type="ChEBI" id="CHEBI:456216"/>
        <dbReference type="EC" id="5.6.2.4"/>
    </reaction>
</comment>
<comment type="subunit">
    <text evidence="1 10">Component of the 7-subunit TFIIH core complex composed of XPB, XPD, TFB1/GTF2H1, GTF2H2/P44, TFB4/GTF2H3, TFB2/GTF2H4 and TFB5/GTF2H5, which is active in NER. The core complex associates with the 3-subunit CDK-activating kinase (CAK) module composed of CYCH1/cyclin H1, CDKD and MAT1/At4g30820 to form the 10-subunit holoenzyme (holo-TFIIH) active in transcription.</text>
</comment>
<comment type="subcellular location">
    <subcellularLocation>
        <location evidence="9">Nucleus</location>
    </subcellularLocation>
</comment>
<comment type="tissue specificity">
    <text evidence="7 8">Expressed ubiquitously (PubMed:15656976, PubMed:9524267).</text>
</comment>
<comment type="developmental stage">
    <text evidence="7">More highly transcribed in 10-day-old seedlings than 3-day-old seedlings (PubMed:15656976).</text>
</comment>
<comment type="induction">
    <text evidence="7">Higher transcription in light than in dark (PubMed:15656976).</text>
</comment>
<comment type="disruption phenotype">
    <text evidence="6">Slightly delayed development, loss of germination synchrony, lower germination rate and greatly increased sensitivity to HOCl; plants are morphologically wild-type (PubMed:11737776). Increased sensitivity to methyl methane sulfonate (MMS) but not to UV light (PubMed:11737776).</text>
</comment>
<comment type="similarity">
    <text evidence="9">Belongs to the helicase family. RAD25/XPB subfamily.</text>
</comment>
<comment type="sequence caution" evidence="9">
    <conflict type="erroneous gene model prediction">
        <sequence resource="EMBL-CDS" id="BAB08509"/>
    </conflict>
</comment>
<gene>
    <name type="primary">XPB1</name>
    <name type="synonym">XPB</name>
    <name type="ordered locus">At5g41370</name>
    <name type="ORF">MYC6.8</name>
</gene>
<protein>
    <recommendedName>
        <fullName>General transcription and DNA repair factor IIH helicase/translocase subunit XPB1</fullName>
        <shortName>TFIIH subunit XPB</shortName>
        <ecNumber evidence="9">5.6.2.4</ecNumber>
    </recommendedName>
    <alternativeName>
        <fullName evidence="9">DNA 3'-5' helicase/translocase XPB1</fullName>
    </alternativeName>
    <alternativeName>
        <fullName>ERCC3 homolog 1</fullName>
    </alternativeName>
    <alternativeName>
        <fullName>Protein araXPB</fullName>
    </alternativeName>
    <alternativeName>
        <fullName>RAD25 homolog 1</fullName>
        <shortName>AtXPB1</shortName>
    </alternativeName>
    <alternativeName>
        <fullName>XPB homolog 1</fullName>
    </alternativeName>
</protein>